<evidence type="ECO:0000250" key="1">
    <source>
        <dbReference type="UniProtKB" id="P10063"/>
    </source>
</evidence>
<evidence type="ECO:0000250" key="2">
    <source>
        <dbReference type="UniProtKB" id="P14867"/>
    </source>
</evidence>
<evidence type="ECO:0000250" key="3">
    <source>
        <dbReference type="UniProtKB" id="P23576"/>
    </source>
</evidence>
<evidence type="ECO:0000250" key="4">
    <source>
        <dbReference type="UniProtKB" id="P28472"/>
    </source>
</evidence>
<evidence type="ECO:0000250" key="5">
    <source>
        <dbReference type="UniProtKB" id="P62813"/>
    </source>
</evidence>
<evidence type="ECO:0000255" key="6"/>
<evidence type="ECO:0000256" key="7">
    <source>
        <dbReference type="SAM" id="MobiDB-lite"/>
    </source>
</evidence>
<evidence type="ECO:0000269" key="8">
    <source>
    </source>
</evidence>
<evidence type="ECO:0000269" key="9">
    <source>
    </source>
</evidence>
<evidence type="ECO:0000269" key="10">
    <source>
    </source>
</evidence>
<evidence type="ECO:0000269" key="11">
    <source>
    </source>
</evidence>
<evidence type="ECO:0000303" key="12">
    <source>
    </source>
</evidence>
<evidence type="ECO:0000303" key="13">
    <source>
    </source>
</evidence>
<evidence type="ECO:0000305" key="14"/>
<evidence type="ECO:0000312" key="15">
    <source>
        <dbReference type="MGI" id="MGI:95614"/>
    </source>
</evidence>
<sequence length="451" mass="51139">MKTKLSTCNVWSLLLVLLVWDPVRLVLANIQEDEAKNNITIFTRILDRLLDGYDNRLRPGLGDSITEVFTNIYVTSFGPVSDTDMEYTIDVFFRQKWKDERLKFKGPMNILRLNNLMASKIWTPDTFFHNGKKSVAHNMTMPNKLLRIQDDGTLLYTMRLTVQAECPMHLEDFPMDAHSCPLKFGSYAYTTSEVTYIWTYNASDSVQVAPDGSRLNQYDLLGQSIGKETIKSSTGEYTVMTAHFHLKRKIGYFVIQTYLPCIMTVILSQVSFWLNRESVPARTVFGVTTVLTMTTLSISARNSLPKVAYATAMDWFIAVCYAFVFSALIEFATVNYFTKRGWAWDGKSVVNDKKKEKGSVMIQNNAYAVAVANYAPNLSKDPVLSTISKSATTPEPNKKPENKPAEAKKTFNSVSKIDRMSRIVFPVLFGTFNLVYWATYLNREPVLGVSP</sequence>
<proteinExistence type="evidence at protein level"/>
<reference key="1">
    <citation type="journal article" date="1992" name="J. Mol. Neurosci.">
        <title>The alpha 1, alpha 2, and alpha 3 subunits of GABAA receptors: comparison in seizure-prone and -resistant mice and during development.</title>
        <authorList>
            <person name="Wang J.B."/>
            <person name="Kofuji P."/>
            <person name="Fernando J.C."/>
            <person name="Moss S.J."/>
            <person name="Huganir R.L."/>
            <person name="Burt D.R."/>
        </authorList>
    </citation>
    <scope>NUCLEOTIDE SEQUENCE [MRNA]</scope>
    <source>
        <strain>C57BL/6J</strain>
        <strain>DBA/2J</strain>
        <tissue>Brain</tissue>
    </source>
</reference>
<reference key="2">
    <citation type="journal article" date="2001" name="Nat. Neurosci.">
        <title>GABA(A) receptor cell surface number and subunit stability are regulated by the ubiquitin-like protein Plic-1.</title>
        <authorList>
            <person name="Bedford F.K."/>
            <person name="Kittler J.T."/>
            <person name="Muller E."/>
            <person name="Thomas P."/>
            <person name="Uren J.M."/>
            <person name="Merlo D."/>
            <person name="Wisden W."/>
            <person name="Triller A."/>
            <person name="Smart T.G."/>
            <person name="Moss S.J."/>
        </authorList>
    </citation>
    <scope>INTERACTION WITH UBQLN1</scope>
    <scope>SUBCELLULAR LOCATION</scope>
    <scope>SUBUNIT</scope>
</reference>
<reference key="3">
    <citation type="journal article" date="2016" name="J. Biol. Chem.">
        <title>Gamma-aminobutyric acid type A (GABAA) receptor subunits play a direct structural role in synaptic contact formation via their N-terminal extracellular domains.</title>
        <authorList>
            <person name="Brown L.E."/>
            <person name="Nicholson M.W."/>
            <person name="Arama J.E."/>
            <person name="Mercer A."/>
            <person name="Thomson A.M."/>
            <person name="Jovanovic J.N."/>
        </authorList>
    </citation>
    <scope>FUNCTION</scope>
    <scope>GLYCOSYLATION</scope>
    <scope>DOMAIN EXTRACELLULAR</scope>
</reference>
<reference key="4">
    <citation type="journal article" date="2017" name="Cell Rep.">
        <title>An essential role for the tetraspanin LHFPL4 in the cell-type-specific targeting and clustering of synaptic GABAA ceceptors.</title>
        <authorList>
            <person name="Davenport E.C."/>
            <person name="Pendolino V."/>
            <person name="Kontou G."/>
            <person name="McGee T.P."/>
            <person name="Sheehan D.F."/>
            <person name="Lopez-Domenech G."/>
            <person name="Farrant M."/>
            <person name="Kittler J.T."/>
        </authorList>
    </citation>
    <scope>INTERACTION WITH LHFPL4</scope>
    <scope>SUBCELLULAR LOCATION</scope>
</reference>
<reference key="5">
    <citation type="journal article" date="2019" name="Science">
        <title>Shisa7 is a GABAA receptor auxiliary subunit controlling benzodiazepine actions.</title>
        <authorList>
            <person name="Han W."/>
            <person name="Li J."/>
            <person name="Pelkey K.A."/>
            <person name="Pandey S."/>
            <person name="Chen X."/>
            <person name="Wang Y.X."/>
            <person name="Wu K."/>
            <person name="Ge L."/>
            <person name="Li T."/>
            <person name="Castellano D."/>
            <person name="Liu C."/>
            <person name="Wu L.G."/>
            <person name="Petralia R.S."/>
            <person name="Lynch J.W."/>
            <person name="McBain C.J."/>
            <person name="Lu W."/>
        </authorList>
    </citation>
    <scope>INTERACTION WITH SHISA7</scope>
</reference>
<feature type="signal peptide" evidence="6">
    <location>
        <begin position="1"/>
        <end position="28"/>
    </location>
</feature>
<feature type="chain" id="PRO_0000000434" description="Gamma-aminobutyric acid receptor subunit alpha-2">
    <location>
        <begin position="29"/>
        <end position="451"/>
    </location>
</feature>
<feature type="topological domain" description="Extracellular" evidence="14">
    <location>
        <begin position="29"/>
        <end position="249"/>
    </location>
</feature>
<feature type="transmembrane region" description="Helical" evidence="6">
    <location>
        <begin position="250"/>
        <end position="270"/>
    </location>
</feature>
<feature type="topological domain" description="Cytoplasmic" evidence="14">
    <location>
        <begin position="271"/>
        <end position="280"/>
    </location>
</feature>
<feature type="transmembrane region" description="Helical" evidence="6">
    <location>
        <begin position="281"/>
        <end position="300"/>
    </location>
</feature>
<feature type="topological domain" description="Extracellular" evidence="14">
    <location>
        <begin position="301"/>
        <end position="311"/>
    </location>
</feature>
<feature type="transmembrane region" description="Helical" evidence="6">
    <location>
        <begin position="312"/>
        <end position="332"/>
    </location>
</feature>
<feature type="topological domain" description="Cytoplasmic" evidence="14">
    <location>
        <begin position="333"/>
        <end position="420"/>
    </location>
</feature>
<feature type="transmembrane region" description="Helical" evidence="6">
    <location>
        <begin position="421"/>
        <end position="441"/>
    </location>
</feature>
<feature type="topological domain" description="Extracellular" evidence="14">
    <location>
        <begin position="442"/>
        <end position="451"/>
    </location>
</feature>
<feature type="region of interest" description="Disordered" evidence="7">
    <location>
        <begin position="389"/>
        <end position="408"/>
    </location>
</feature>
<feature type="compositionally biased region" description="Basic and acidic residues" evidence="7">
    <location>
        <begin position="396"/>
        <end position="408"/>
    </location>
</feature>
<feature type="binding site" evidence="2">
    <location>
        <position position="94"/>
    </location>
    <ligand>
        <name>4-aminobutanoate</name>
        <dbReference type="ChEBI" id="CHEBI:59888"/>
        <note>ligand shared with the neighboring beta subunit</note>
    </ligand>
</feature>
<feature type="binding site" evidence="5">
    <location>
        <position position="157"/>
    </location>
    <ligand>
        <name>4-aminobutanoate</name>
        <dbReference type="ChEBI" id="CHEBI:59888"/>
        <note>ligand shared with the neighboring beta subunit</note>
    </ligand>
</feature>
<feature type="glycosylation site" description="N-linked (GlcNAc...) asparagine" evidence="6">
    <location>
        <position position="38"/>
    </location>
</feature>
<feature type="glycosylation site" description="N-linked (GlcNAc...) asparagine" evidence="6">
    <location>
        <position position="138"/>
    </location>
</feature>
<feature type="disulfide bond" evidence="4">
    <location>
        <begin position="166"/>
        <end position="180"/>
    </location>
</feature>
<accession>P26048</accession>
<keyword id="KW-1003">Cell membrane</keyword>
<keyword id="KW-0966">Cell projection</keyword>
<keyword id="KW-0868">Chloride</keyword>
<keyword id="KW-0869">Chloride channel</keyword>
<keyword id="KW-0968">Cytoplasmic vesicle</keyword>
<keyword id="KW-1015">Disulfide bond</keyword>
<keyword id="KW-0325">Glycoprotein</keyword>
<keyword id="KW-0407">Ion channel</keyword>
<keyword id="KW-0406">Ion transport</keyword>
<keyword id="KW-1071">Ligand-gated ion channel</keyword>
<keyword id="KW-0472">Membrane</keyword>
<keyword id="KW-0628">Postsynaptic cell membrane</keyword>
<keyword id="KW-0675">Receptor</keyword>
<keyword id="KW-1185">Reference proteome</keyword>
<keyword id="KW-0732">Signal</keyword>
<keyword id="KW-0770">Synapse</keyword>
<keyword id="KW-0812">Transmembrane</keyword>
<keyword id="KW-1133">Transmembrane helix</keyword>
<keyword id="KW-0813">Transport</keyword>
<dbReference type="EMBL" id="M86567">
    <property type="protein sequence ID" value="AAA37650.1"/>
    <property type="molecule type" value="mRNA"/>
</dbReference>
<dbReference type="CCDS" id="CCDS19327.1"/>
<dbReference type="RefSeq" id="NP_001415417.1">
    <property type="nucleotide sequence ID" value="NM_001428488.1"/>
</dbReference>
<dbReference type="RefSeq" id="NP_032092.1">
    <property type="nucleotide sequence ID" value="NM_008066.5"/>
</dbReference>
<dbReference type="RefSeq" id="XP_006503796.1">
    <property type="nucleotide sequence ID" value="XM_006503733.5"/>
</dbReference>
<dbReference type="SMR" id="P26048"/>
<dbReference type="BioGRID" id="199798">
    <property type="interactions" value="4"/>
</dbReference>
<dbReference type="ComplexPortal" id="CPX-2985">
    <property type="entry name" value="GABA-A receptor, alpha2-beta3-gamma2"/>
</dbReference>
<dbReference type="FunCoup" id="P26048">
    <property type="interactions" value="731"/>
</dbReference>
<dbReference type="STRING" id="10090.ENSMUSP00000142892"/>
<dbReference type="ChEMBL" id="CHEMBL2094133"/>
<dbReference type="DrugCentral" id="P26048"/>
<dbReference type="GlyConnect" id="2321">
    <property type="glycosylation" value="5 N-Linked glycans (1 site)"/>
</dbReference>
<dbReference type="GlyCosmos" id="P26048">
    <property type="glycosylation" value="2 sites, 5 glycans"/>
</dbReference>
<dbReference type="GlyGen" id="P26048">
    <property type="glycosylation" value="3 sites, 7 N-linked glycans (2 sites), 1 O-linked glycan (1 site)"/>
</dbReference>
<dbReference type="iPTMnet" id="P26048"/>
<dbReference type="PhosphoSitePlus" id="P26048"/>
<dbReference type="SwissPalm" id="P26048"/>
<dbReference type="PaxDb" id="10090-ENSMUSP00000000572"/>
<dbReference type="PeptideAtlas" id="P26048"/>
<dbReference type="ProteomicsDB" id="267772"/>
<dbReference type="ABCD" id="P26048">
    <property type="antibodies" value="2 sequenced antibodies"/>
</dbReference>
<dbReference type="Antibodypedia" id="12030">
    <property type="antibodies" value="344 antibodies from 33 providers"/>
</dbReference>
<dbReference type="DNASU" id="14395"/>
<dbReference type="Ensembl" id="ENSMUST00000197284.5">
    <property type="protein sequence ID" value="ENSMUSP00000142892.2"/>
    <property type="gene ID" value="ENSMUSG00000000560.10"/>
</dbReference>
<dbReference type="GeneID" id="14395"/>
<dbReference type="KEGG" id="mmu:14395"/>
<dbReference type="UCSC" id="uc008xqv.1">
    <property type="organism name" value="mouse"/>
</dbReference>
<dbReference type="AGR" id="MGI:95614"/>
<dbReference type="CTD" id="2555"/>
<dbReference type="MGI" id="MGI:95614">
    <property type="gene designation" value="Gabra2"/>
</dbReference>
<dbReference type="VEuPathDB" id="HostDB:ENSMUSG00000000560"/>
<dbReference type="eggNOG" id="KOG3642">
    <property type="taxonomic scope" value="Eukaryota"/>
</dbReference>
<dbReference type="GeneTree" id="ENSGT00940000157266"/>
<dbReference type="InParanoid" id="P26048"/>
<dbReference type="OMA" id="AXSITEV"/>
<dbReference type="OrthoDB" id="203862at2759"/>
<dbReference type="PhylomeDB" id="P26048"/>
<dbReference type="TreeFam" id="TF315453"/>
<dbReference type="Reactome" id="R-MMU-977443">
    <property type="pathway name" value="GABA receptor activation"/>
</dbReference>
<dbReference type="BioGRID-ORCS" id="14395">
    <property type="hits" value="3 hits in 78 CRISPR screens"/>
</dbReference>
<dbReference type="CD-CODE" id="CE726F99">
    <property type="entry name" value="Postsynaptic density"/>
</dbReference>
<dbReference type="PRO" id="PR:P26048"/>
<dbReference type="Proteomes" id="UP000000589">
    <property type="component" value="Chromosome 5"/>
</dbReference>
<dbReference type="RNAct" id="P26048">
    <property type="molecule type" value="protein"/>
</dbReference>
<dbReference type="Bgee" id="ENSMUSG00000000560">
    <property type="expression patterns" value="Expressed in subiculum and 92 other cell types or tissues"/>
</dbReference>
<dbReference type="ExpressionAtlas" id="P26048">
    <property type="expression patterns" value="baseline and differential"/>
</dbReference>
<dbReference type="GO" id="GO:0030424">
    <property type="term" value="C:axon"/>
    <property type="evidence" value="ECO:0000314"/>
    <property type="project" value="MGI"/>
</dbReference>
<dbReference type="GO" id="GO:0034707">
    <property type="term" value="C:chloride channel complex"/>
    <property type="evidence" value="ECO:0007669"/>
    <property type="project" value="UniProtKB-KW"/>
</dbReference>
<dbReference type="GO" id="GO:0030425">
    <property type="term" value="C:dendrite"/>
    <property type="evidence" value="ECO:0000314"/>
    <property type="project" value="MGI"/>
</dbReference>
<dbReference type="GO" id="GO:1902711">
    <property type="term" value="C:GABA-A receptor complex"/>
    <property type="evidence" value="ECO:0000266"/>
    <property type="project" value="ComplexPortal"/>
</dbReference>
<dbReference type="GO" id="GO:0098982">
    <property type="term" value="C:GABA-ergic synapse"/>
    <property type="evidence" value="ECO:0000314"/>
    <property type="project" value="SynGO"/>
</dbReference>
<dbReference type="GO" id="GO:0060077">
    <property type="term" value="C:inhibitory synapse"/>
    <property type="evidence" value="ECO:0000314"/>
    <property type="project" value="MGI"/>
</dbReference>
<dbReference type="GO" id="GO:0043025">
    <property type="term" value="C:neuronal cell body"/>
    <property type="evidence" value="ECO:0000314"/>
    <property type="project" value="MGI"/>
</dbReference>
<dbReference type="GO" id="GO:0098794">
    <property type="term" value="C:postsynapse"/>
    <property type="evidence" value="ECO:0000314"/>
    <property type="project" value="MGI"/>
</dbReference>
<dbReference type="GO" id="GO:0099634">
    <property type="term" value="C:postsynaptic specialization membrane"/>
    <property type="evidence" value="ECO:0000314"/>
    <property type="project" value="SynGO"/>
</dbReference>
<dbReference type="GO" id="GO:0030672">
    <property type="term" value="C:synaptic vesicle membrane"/>
    <property type="evidence" value="ECO:0007669"/>
    <property type="project" value="Ensembl"/>
</dbReference>
<dbReference type="GO" id="GO:0008503">
    <property type="term" value="F:benzodiazepine receptor activity"/>
    <property type="evidence" value="ECO:0007669"/>
    <property type="project" value="Ensembl"/>
</dbReference>
<dbReference type="GO" id="GO:0004890">
    <property type="term" value="F:GABA-A receptor activity"/>
    <property type="evidence" value="ECO:0007669"/>
    <property type="project" value="InterPro"/>
</dbReference>
<dbReference type="GO" id="GO:0022851">
    <property type="term" value="F:GABA-gated chloride ion channel activity"/>
    <property type="evidence" value="ECO:0007669"/>
    <property type="project" value="Ensembl"/>
</dbReference>
<dbReference type="GO" id="GO:0099507">
    <property type="term" value="F:ligand-gated monoatomic ion channel activity involved in regulation of presynaptic membrane potential"/>
    <property type="evidence" value="ECO:0007669"/>
    <property type="project" value="Ensembl"/>
</dbReference>
<dbReference type="GO" id="GO:1904315">
    <property type="term" value="F:transmitter-gated monoatomic ion channel activity involved in regulation of postsynaptic membrane potential"/>
    <property type="evidence" value="ECO:0007669"/>
    <property type="project" value="Ensembl"/>
</dbReference>
<dbReference type="GO" id="GO:0007214">
    <property type="term" value="P:gamma-aminobutyric acid signaling pathway"/>
    <property type="evidence" value="ECO:0000266"/>
    <property type="project" value="ComplexPortal"/>
</dbReference>
<dbReference type="GO" id="GO:1904862">
    <property type="term" value="P:inhibitory synapse assembly"/>
    <property type="evidence" value="ECO:0000314"/>
    <property type="project" value="UniProtKB"/>
</dbReference>
<dbReference type="CDD" id="cd19035">
    <property type="entry name" value="LGIC_ECD_GABAAR_A2"/>
    <property type="match status" value="1"/>
</dbReference>
<dbReference type="CDD" id="cd19052">
    <property type="entry name" value="LGIC_TM_GABAAR_alpha"/>
    <property type="match status" value="1"/>
</dbReference>
<dbReference type="FunFam" id="2.70.170.10:FF:000001">
    <property type="entry name" value="Gamma-aminobutyric acid A receptor subunit alpha-2"/>
    <property type="match status" value="1"/>
</dbReference>
<dbReference type="FunFam" id="1.20.58.390:FF:000002">
    <property type="entry name" value="Putative gamma-aminobutyric acid receptor subunit alpha-5"/>
    <property type="match status" value="1"/>
</dbReference>
<dbReference type="Gene3D" id="2.70.170.10">
    <property type="entry name" value="Neurotransmitter-gated ion-channel ligand-binding domain"/>
    <property type="match status" value="1"/>
</dbReference>
<dbReference type="Gene3D" id="1.20.58.390">
    <property type="entry name" value="Neurotransmitter-gated ion-channel transmembrane domain"/>
    <property type="match status" value="1"/>
</dbReference>
<dbReference type="InterPro" id="IPR006028">
    <property type="entry name" value="GABAA/Glycine_rcpt"/>
</dbReference>
<dbReference type="InterPro" id="IPR001390">
    <property type="entry name" value="GABAAa_rcpt"/>
</dbReference>
<dbReference type="InterPro" id="IPR005432">
    <property type="entry name" value="GABBAa2_rcpt"/>
</dbReference>
<dbReference type="InterPro" id="IPR047024">
    <property type="entry name" value="Gabra-1-6_TM"/>
</dbReference>
<dbReference type="InterPro" id="IPR047023">
    <property type="entry name" value="Gabra-2_ECD"/>
</dbReference>
<dbReference type="InterPro" id="IPR006202">
    <property type="entry name" value="Neur_chan_lig-bd"/>
</dbReference>
<dbReference type="InterPro" id="IPR036734">
    <property type="entry name" value="Neur_chan_lig-bd_sf"/>
</dbReference>
<dbReference type="InterPro" id="IPR006201">
    <property type="entry name" value="Neur_channel"/>
</dbReference>
<dbReference type="InterPro" id="IPR036719">
    <property type="entry name" value="Neuro-gated_channel_TM_sf"/>
</dbReference>
<dbReference type="InterPro" id="IPR038050">
    <property type="entry name" value="Neuro_actylchol_rec"/>
</dbReference>
<dbReference type="InterPro" id="IPR006029">
    <property type="entry name" value="Neurotrans-gated_channel_TM"/>
</dbReference>
<dbReference type="InterPro" id="IPR018000">
    <property type="entry name" value="Neurotransmitter_ion_chnl_CS"/>
</dbReference>
<dbReference type="NCBIfam" id="TIGR00860">
    <property type="entry name" value="LIC"/>
    <property type="match status" value="1"/>
</dbReference>
<dbReference type="PANTHER" id="PTHR18945">
    <property type="entry name" value="NEUROTRANSMITTER GATED ION CHANNEL"/>
    <property type="match status" value="1"/>
</dbReference>
<dbReference type="Pfam" id="PF02931">
    <property type="entry name" value="Neur_chan_LBD"/>
    <property type="match status" value="1"/>
</dbReference>
<dbReference type="Pfam" id="PF02932">
    <property type="entry name" value="Neur_chan_memb"/>
    <property type="match status" value="2"/>
</dbReference>
<dbReference type="PRINTS" id="PR01079">
    <property type="entry name" value="GABAARALPHA"/>
</dbReference>
<dbReference type="PRINTS" id="PR01615">
    <property type="entry name" value="GABAARALPHA2"/>
</dbReference>
<dbReference type="PRINTS" id="PR00253">
    <property type="entry name" value="GABAARECEPTR"/>
</dbReference>
<dbReference type="PRINTS" id="PR00252">
    <property type="entry name" value="NRIONCHANNEL"/>
</dbReference>
<dbReference type="SUPFAM" id="SSF90112">
    <property type="entry name" value="Neurotransmitter-gated ion-channel transmembrane pore"/>
    <property type="match status" value="1"/>
</dbReference>
<dbReference type="SUPFAM" id="SSF63712">
    <property type="entry name" value="Nicotinic receptor ligand binding domain-like"/>
    <property type="match status" value="1"/>
</dbReference>
<dbReference type="PROSITE" id="PS00236">
    <property type="entry name" value="NEUROTR_ION_CHANNEL"/>
    <property type="match status" value="1"/>
</dbReference>
<name>GBRA2_MOUSE</name>
<organism>
    <name type="scientific">Mus musculus</name>
    <name type="common">Mouse</name>
    <dbReference type="NCBI Taxonomy" id="10090"/>
    <lineage>
        <taxon>Eukaryota</taxon>
        <taxon>Metazoa</taxon>
        <taxon>Chordata</taxon>
        <taxon>Craniata</taxon>
        <taxon>Vertebrata</taxon>
        <taxon>Euteleostomi</taxon>
        <taxon>Mammalia</taxon>
        <taxon>Eutheria</taxon>
        <taxon>Euarchontoglires</taxon>
        <taxon>Glires</taxon>
        <taxon>Rodentia</taxon>
        <taxon>Myomorpha</taxon>
        <taxon>Muroidea</taxon>
        <taxon>Muridae</taxon>
        <taxon>Murinae</taxon>
        <taxon>Mus</taxon>
        <taxon>Mus</taxon>
    </lineage>
</organism>
<protein>
    <recommendedName>
        <fullName evidence="12">Gamma-aminobutyric acid receptor subunit alpha-2</fullName>
    </recommendedName>
    <alternativeName>
        <fullName evidence="12">GABA(A) receptor subunit alpha-2</fullName>
        <shortName evidence="13">GABAAR subunit alpha-2</shortName>
    </alternativeName>
</protein>
<comment type="function">
    <text evidence="1 2 9">Alpha subunit of the heteropentameric ligand-gated chloride channel gated by gamma-aminobutyric acid (GABA), a major inhibitory neurotransmitter in the brain (PubMed:27129275). GABA-gated chloride channels, also named GABA(A) receptors (GABAAR), consist of five subunits arranged around a central pore and contain GABA active binding site(s) located at the alpha and beta subunit interface(s) (By similarity). When activated by GABA, GABAARs selectively allow the flow of chloride anions across the cell membrane down their electrochemical gradient (By similarity). Chloride influx into the postsynaptic neuron following GABAAR opening decreases the neuron ability to generate a new action potential, thereby reducing nerve transmission (By similarity). The alpha-2 subunit exhibits synaptogenic activity together with beta-2 and very little to no activity together with beta-3, the gamma-2 subunit being necessary but not sufficient to induce rapid synaptic contacts formation (PubMed:27129275).</text>
</comment>
<comment type="catalytic activity">
    <reaction evidence="1">
        <text>chloride(in) = chloride(out)</text>
        <dbReference type="Rhea" id="RHEA:29823"/>
        <dbReference type="ChEBI" id="CHEBI:17996"/>
    </reaction>
</comment>
<comment type="activity regulation">
    <text evidence="1">Activated by pentobarbital (By similarity). Inhibited by the antagonist bicuculline (By similarity).</text>
</comment>
<comment type="subunit">
    <text evidence="3 8 10 11 12">Heteropentamer, formed by a combination of alpha (GABRA1-6), beta (GABRB1-3), gamma (GABRG1-3), delta (GABRD), epsilon (GABRE), rho (GABRR1-3), pi (GABRP) and theta (GABRQ) subunits, each subunit exhibiting distinct physiological and pharmacological properties (PubMed:11528422). Interacts with UBQLN1 (PubMed:11528422). Interacts with KIF21B (By similarity). Interacts with LHFPL4 (PubMed:11528422, PubMed:28978485). Interacts with SHISA7; interaction leads to the regulation of GABA(A) receptor trafficking, channel deactivation kinetics and pharmacology (PubMed:31601770).</text>
</comment>
<comment type="subcellular location">
    <subcellularLocation>
        <location evidence="8">Postsynaptic cell membrane</location>
        <topology evidence="6">Multi-pass membrane protein</topology>
    </subcellularLocation>
    <subcellularLocation>
        <location evidence="8 10">Cell membrane</location>
        <topology evidence="6">Multi-pass membrane protein</topology>
    </subcellularLocation>
    <subcellularLocation>
        <location evidence="3">Cytoplasmic vesicle membrane</location>
    </subcellularLocation>
    <subcellularLocation>
        <location evidence="10">Cell projection</location>
        <location evidence="10">Dendrite</location>
    </subcellularLocation>
</comment>
<comment type="domain">
    <text evidence="9">The extracellular domain contributes to synaptic contact formation.</text>
</comment>
<comment type="domain">
    <text evidence="2">The GABA-binding pockets are located at the interface between neighboring alpha and beta subunits.</text>
</comment>
<comment type="domain">
    <text evidence="2">GABAARs subunits share a common topological structure: a peptide sequence made up of a long extracellular N-terminal, four transmembrane domains, intracellular or cytoplasmic domain located between the third and the fourth transmembrane domains.</text>
</comment>
<comment type="PTM">
    <text evidence="9">Glycosylated.</text>
</comment>
<comment type="similarity">
    <text evidence="14">Belongs to the ligand-gated ion channel (TC 1.A.9) family. Gamma-aminobutyric acid receptor (TC 1.A.9.5) subfamily. GABRA2 sub-subfamily.</text>
</comment>
<gene>
    <name evidence="15" type="primary">Gabra2</name>
    <name type="synonym">Gabra-2</name>
</gene>